<organism>
    <name type="scientific">Phocaeicola vulgatus (strain ATCC 8482 / DSM 1447 / JCM 5826 / CCUG 4940 / NBRC 14291 / NCTC 11154)</name>
    <name type="common">Bacteroides vulgatus</name>
    <dbReference type="NCBI Taxonomy" id="435590"/>
    <lineage>
        <taxon>Bacteria</taxon>
        <taxon>Pseudomonadati</taxon>
        <taxon>Bacteroidota</taxon>
        <taxon>Bacteroidia</taxon>
        <taxon>Bacteroidales</taxon>
        <taxon>Bacteroidaceae</taxon>
        <taxon>Phocaeicola</taxon>
    </lineage>
</organism>
<dbReference type="EMBL" id="CP000139">
    <property type="protein sequence ID" value="ABR39753.1"/>
    <property type="molecule type" value="Genomic_DNA"/>
</dbReference>
<dbReference type="RefSeq" id="WP_005839040.1">
    <property type="nucleotide sequence ID" value="NZ_JANSWM010000089.1"/>
</dbReference>
<dbReference type="SMR" id="A6L239"/>
<dbReference type="STRING" id="435590.BVU_2091"/>
<dbReference type="PaxDb" id="435590-BVU_2091"/>
<dbReference type="GeneID" id="5303055"/>
<dbReference type="KEGG" id="bvu:BVU_2091"/>
<dbReference type="eggNOG" id="COG3681">
    <property type="taxonomic scope" value="Bacteria"/>
</dbReference>
<dbReference type="HOGENOM" id="CLU_051840_0_0_10"/>
<dbReference type="BioCyc" id="BVUL435590:G1G59-2183-MONOMER"/>
<dbReference type="Proteomes" id="UP000002861">
    <property type="component" value="Chromosome"/>
</dbReference>
<dbReference type="GO" id="GO:0080146">
    <property type="term" value="F:L-cysteine desulfhydrase activity"/>
    <property type="evidence" value="ECO:0007669"/>
    <property type="project" value="TreeGrafter"/>
</dbReference>
<dbReference type="GO" id="GO:0019450">
    <property type="term" value="P:L-cysteine catabolic process to pyruvate"/>
    <property type="evidence" value="ECO:0007669"/>
    <property type="project" value="TreeGrafter"/>
</dbReference>
<dbReference type="HAMAP" id="MF_01845">
    <property type="entry name" value="UPF0597"/>
    <property type="match status" value="1"/>
</dbReference>
<dbReference type="InterPro" id="IPR005130">
    <property type="entry name" value="Ser_deHydtase-like_asu"/>
</dbReference>
<dbReference type="InterPro" id="IPR021144">
    <property type="entry name" value="UPF0597"/>
</dbReference>
<dbReference type="PANTHER" id="PTHR30501">
    <property type="entry name" value="UPF0597 PROTEIN YHAM"/>
    <property type="match status" value="1"/>
</dbReference>
<dbReference type="PANTHER" id="PTHR30501:SF2">
    <property type="entry name" value="UPF0597 PROTEIN YHAM"/>
    <property type="match status" value="1"/>
</dbReference>
<dbReference type="Pfam" id="PF03313">
    <property type="entry name" value="SDH_alpha"/>
    <property type="match status" value="1"/>
</dbReference>
<dbReference type="PIRSF" id="PIRSF006054">
    <property type="entry name" value="UCP006054"/>
    <property type="match status" value="1"/>
</dbReference>
<comment type="similarity">
    <text evidence="1">Belongs to the UPF0597 family.</text>
</comment>
<sequence length="431" mass="46074">MIAKPEREQIIALINREVVPAIGCTEPIAVALCVAKATETLGKRPERIKALLSANILKNAMGVGIPGTGMIGLPIAIALGALIGKSEYQLEVLKDSTPDAVAEGKKLIDSQAISIGLKENIEEKLYIEIICEADGDTATAIIACGHTNFIYVALNNQVLLNKQTTSTCNEDAKEPELNLRKVYDFATTTPLDEIRFILETKRLNKAAAERSFKGNYGHELGKILKSSKSEEQILGSNTFTHILSYTSAACDARMAGAMIPVMSNSGSGNQGITATLPVVVYAEDNHKSEEELIRALTLSHLTAIYIKQSLGRLSALCGCVVAATGSSCGITYLMGGTYEQITFAVQNMIANLTGMICDGAKPSCALKLSSGVSTAVFSAILAMEHKCVSSVEGIIDNDVDRSIRNLTRIGSQGMNETDKLVLDIMTHKQCD</sequence>
<reference key="1">
    <citation type="journal article" date="2007" name="PLoS Biol.">
        <title>Evolution of symbiotic bacteria in the distal human intestine.</title>
        <authorList>
            <person name="Xu J."/>
            <person name="Mahowald M.A."/>
            <person name="Ley R.E."/>
            <person name="Lozupone C.A."/>
            <person name="Hamady M."/>
            <person name="Martens E.C."/>
            <person name="Henrissat B."/>
            <person name="Coutinho P.M."/>
            <person name="Minx P."/>
            <person name="Latreille P."/>
            <person name="Cordum H."/>
            <person name="Van Brunt A."/>
            <person name="Kim K."/>
            <person name="Fulton R.S."/>
            <person name="Fulton L.A."/>
            <person name="Clifton S.W."/>
            <person name="Wilson R.K."/>
            <person name="Knight R.D."/>
            <person name="Gordon J.I."/>
        </authorList>
    </citation>
    <scope>NUCLEOTIDE SEQUENCE [LARGE SCALE GENOMIC DNA]</scope>
    <source>
        <strain>ATCC 8482 / DSM 1447 / JCM 5826 / CCUG 4940 / NBRC 14291 / NCTC 11154</strain>
    </source>
</reference>
<protein>
    <recommendedName>
        <fullName evidence="1">UPF0597 protein BVU_2091</fullName>
    </recommendedName>
</protein>
<feature type="chain" id="PRO_0000339788" description="UPF0597 protein BVU_2091">
    <location>
        <begin position="1"/>
        <end position="431"/>
    </location>
</feature>
<evidence type="ECO:0000255" key="1">
    <source>
        <dbReference type="HAMAP-Rule" id="MF_01845"/>
    </source>
</evidence>
<proteinExistence type="inferred from homology"/>
<name>Y2091_PHOV8</name>
<accession>A6L239</accession>
<gene>
    <name type="ordered locus">BVU_2091</name>
</gene>